<name>PCMD1_HUMAN</name>
<evidence type="ECO:0000250" key="1">
    <source>
        <dbReference type="UniProtKB" id="P22061"/>
    </source>
</evidence>
<evidence type="ECO:0000250" key="2">
    <source>
        <dbReference type="UniProtKB" id="Q27869"/>
    </source>
</evidence>
<evidence type="ECO:0000256" key="3">
    <source>
        <dbReference type="SAM" id="MobiDB-lite"/>
    </source>
</evidence>
<evidence type="ECO:0000269" key="4">
    <source>
    </source>
</evidence>
<evidence type="ECO:0000269" key="5">
    <source>
    </source>
</evidence>
<evidence type="ECO:0000269" key="6">
    <source>
    </source>
</evidence>
<evidence type="ECO:0000269" key="7">
    <source>
    </source>
</evidence>
<evidence type="ECO:0000269" key="8">
    <source>
    </source>
</evidence>
<evidence type="ECO:0000305" key="9"/>
<evidence type="ECO:0000305" key="10">
    <source>
    </source>
</evidence>
<evidence type="ECO:0000312" key="11">
    <source>
        <dbReference type="HGNC" id="HGNC:30483"/>
    </source>
</evidence>
<proteinExistence type="evidence at protein level"/>
<reference key="1">
    <citation type="journal article" date="2004" name="Nat. Genet.">
        <title>Complete sequencing and characterization of 21,243 full-length human cDNAs.</title>
        <authorList>
            <person name="Ota T."/>
            <person name="Suzuki Y."/>
            <person name="Nishikawa T."/>
            <person name="Otsuki T."/>
            <person name="Sugiyama T."/>
            <person name="Irie R."/>
            <person name="Wakamatsu A."/>
            <person name="Hayashi K."/>
            <person name="Sato H."/>
            <person name="Nagai K."/>
            <person name="Kimura K."/>
            <person name="Makita H."/>
            <person name="Sekine M."/>
            <person name="Obayashi M."/>
            <person name="Nishi T."/>
            <person name="Shibahara T."/>
            <person name="Tanaka T."/>
            <person name="Ishii S."/>
            <person name="Yamamoto J."/>
            <person name="Saito K."/>
            <person name="Kawai Y."/>
            <person name="Isono Y."/>
            <person name="Nakamura Y."/>
            <person name="Nagahari K."/>
            <person name="Murakami K."/>
            <person name="Yasuda T."/>
            <person name="Iwayanagi T."/>
            <person name="Wagatsuma M."/>
            <person name="Shiratori A."/>
            <person name="Sudo H."/>
            <person name="Hosoiri T."/>
            <person name="Kaku Y."/>
            <person name="Kodaira H."/>
            <person name="Kondo H."/>
            <person name="Sugawara M."/>
            <person name="Takahashi M."/>
            <person name="Kanda K."/>
            <person name="Yokoi T."/>
            <person name="Furuya T."/>
            <person name="Kikkawa E."/>
            <person name="Omura Y."/>
            <person name="Abe K."/>
            <person name="Kamihara K."/>
            <person name="Katsuta N."/>
            <person name="Sato K."/>
            <person name="Tanikawa M."/>
            <person name="Yamazaki M."/>
            <person name="Ninomiya K."/>
            <person name="Ishibashi T."/>
            <person name="Yamashita H."/>
            <person name="Murakawa K."/>
            <person name="Fujimori K."/>
            <person name="Tanai H."/>
            <person name="Kimata M."/>
            <person name="Watanabe M."/>
            <person name="Hiraoka S."/>
            <person name="Chiba Y."/>
            <person name="Ishida S."/>
            <person name="Ono Y."/>
            <person name="Takiguchi S."/>
            <person name="Watanabe S."/>
            <person name="Yosida M."/>
            <person name="Hotuta T."/>
            <person name="Kusano J."/>
            <person name="Kanehori K."/>
            <person name="Takahashi-Fujii A."/>
            <person name="Hara H."/>
            <person name="Tanase T.-O."/>
            <person name="Nomura Y."/>
            <person name="Togiya S."/>
            <person name="Komai F."/>
            <person name="Hara R."/>
            <person name="Takeuchi K."/>
            <person name="Arita M."/>
            <person name="Imose N."/>
            <person name="Musashino K."/>
            <person name="Yuuki H."/>
            <person name="Oshima A."/>
            <person name="Sasaki N."/>
            <person name="Aotsuka S."/>
            <person name="Yoshikawa Y."/>
            <person name="Matsunawa H."/>
            <person name="Ichihara T."/>
            <person name="Shiohata N."/>
            <person name="Sano S."/>
            <person name="Moriya S."/>
            <person name="Momiyama H."/>
            <person name="Satoh N."/>
            <person name="Takami S."/>
            <person name="Terashima Y."/>
            <person name="Suzuki O."/>
            <person name="Nakagawa S."/>
            <person name="Senoh A."/>
            <person name="Mizoguchi H."/>
            <person name="Goto Y."/>
            <person name="Shimizu F."/>
            <person name="Wakebe H."/>
            <person name="Hishigaki H."/>
            <person name="Watanabe T."/>
            <person name="Sugiyama A."/>
            <person name="Takemoto M."/>
            <person name="Kawakami B."/>
            <person name="Yamazaki M."/>
            <person name="Watanabe K."/>
            <person name="Kumagai A."/>
            <person name="Itakura S."/>
            <person name="Fukuzumi Y."/>
            <person name="Fujimori Y."/>
            <person name="Komiyama M."/>
            <person name="Tashiro H."/>
            <person name="Tanigami A."/>
            <person name="Fujiwara T."/>
            <person name="Ono T."/>
            <person name="Yamada K."/>
            <person name="Fujii Y."/>
            <person name="Ozaki K."/>
            <person name="Hirao M."/>
            <person name="Ohmori Y."/>
            <person name="Kawabata A."/>
            <person name="Hikiji T."/>
            <person name="Kobatake N."/>
            <person name="Inagaki H."/>
            <person name="Ikema Y."/>
            <person name="Okamoto S."/>
            <person name="Okitani R."/>
            <person name="Kawakami T."/>
            <person name="Noguchi S."/>
            <person name="Itoh T."/>
            <person name="Shigeta K."/>
            <person name="Senba T."/>
            <person name="Matsumura K."/>
            <person name="Nakajima Y."/>
            <person name="Mizuno T."/>
            <person name="Morinaga M."/>
            <person name="Sasaki M."/>
            <person name="Togashi T."/>
            <person name="Oyama M."/>
            <person name="Hata H."/>
            <person name="Watanabe M."/>
            <person name="Komatsu T."/>
            <person name="Mizushima-Sugano J."/>
            <person name="Satoh T."/>
            <person name="Shirai Y."/>
            <person name="Takahashi Y."/>
            <person name="Nakagawa K."/>
            <person name="Okumura K."/>
            <person name="Nagase T."/>
            <person name="Nomura N."/>
            <person name="Kikuchi H."/>
            <person name="Masuho Y."/>
            <person name="Yamashita R."/>
            <person name="Nakai K."/>
            <person name="Yada T."/>
            <person name="Nakamura Y."/>
            <person name="Ohara O."/>
            <person name="Isogai T."/>
            <person name="Sugano S."/>
        </authorList>
    </citation>
    <scope>NUCLEOTIDE SEQUENCE [LARGE SCALE MRNA] (ISOFORM 1)</scope>
    <scope>VARIANT ILE-312</scope>
    <source>
        <tissue>Skeletal muscle</tissue>
    </source>
</reference>
<reference key="2">
    <citation type="journal article" date="2006" name="Nature">
        <title>DNA sequence and analysis of human chromosome 8.</title>
        <authorList>
            <person name="Nusbaum C."/>
            <person name="Mikkelsen T.S."/>
            <person name="Zody M.C."/>
            <person name="Asakawa S."/>
            <person name="Taudien S."/>
            <person name="Garber M."/>
            <person name="Kodira C.D."/>
            <person name="Schueler M.G."/>
            <person name="Shimizu A."/>
            <person name="Whittaker C.A."/>
            <person name="Chang J.L."/>
            <person name="Cuomo C.A."/>
            <person name="Dewar K."/>
            <person name="FitzGerald M.G."/>
            <person name="Yang X."/>
            <person name="Allen N.R."/>
            <person name="Anderson S."/>
            <person name="Asakawa T."/>
            <person name="Blechschmidt K."/>
            <person name="Bloom T."/>
            <person name="Borowsky M.L."/>
            <person name="Butler J."/>
            <person name="Cook A."/>
            <person name="Corum B."/>
            <person name="DeArellano K."/>
            <person name="DeCaprio D."/>
            <person name="Dooley K.T."/>
            <person name="Dorris L. III"/>
            <person name="Engels R."/>
            <person name="Gloeckner G."/>
            <person name="Hafez N."/>
            <person name="Hagopian D.S."/>
            <person name="Hall J.L."/>
            <person name="Ishikawa S.K."/>
            <person name="Jaffe D.B."/>
            <person name="Kamat A."/>
            <person name="Kudoh J."/>
            <person name="Lehmann R."/>
            <person name="Lokitsang T."/>
            <person name="Macdonald P."/>
            <person name="Major J.E."/>
            <person name="Matthews C.D."/>
            <person name="Mauceli E."/>
            <person name="Menzel U."/>
            <person name="Mihalev A.H."/>
            <person name="Minoshima S."/>
            <person name="Murayama Y."/>
            <person name="Naylor J.W."/>
            <person name="Nicol R."/>
            <person name="Nguyen C."/>
            <person name="O'Leary S.B."/>
            <person name="O'Neill K."/>
            <person name="Parker S.C.J."/>
            <person name="Polley A."/>
            <person name="Raymond C.K."/>
            <person name="Reichwald K."/>
            <person name="Rodriguez J."/>
            <person name="Sasaki T."/>
            <person name="Schilhabel M."/>
            <person name="Siddiqui R."/>
            <person name="Smith C.L."/>
            <person name="Sneddon T.P."/>
            <person name="Talamas J.A."/>
            <person name="Tenzin P."/>
            <person name="Topham K."/>
            <person name="Venkataraman V."/>
            <person name="Wen G."/>
            <person name="Yamazaki S."/>
            <person name="Young S.K."/>
            <person name="Zeng Q."/>
            <person name="Zimmer A.R."/>
            <person name="Rosenthal A."/>
            <person name="Birren B.W."/>
            <person name="Platzer M."/>
            <person name="Shimizu N."/>
            <person name="Lander E.S."/>
        </authorList>
    </citation>
    <scope>NUCLEOTIDE SEQUENCE [LARGE SCALE GENOMIC DNA]</scope>
</reference>
<reference key="3">
    <citation type="journal article" date="2004" name="Genome Res.">
        <title>The status, quality, and expansion of the NIH full-length cDNA project: the Mammalian Gene Collection (MGC).</title>
        <authorList>
            <consortium name="The MGC Project Team"/>
        </authorList>
    </citation>
    <scope>NUCLEOTIDE SEQUENCE [LARGE SCALE MRNA] (ISOFORM 1)</scope>
    <scope>PARTIAL NUCLEOTIDE SEQUENCE [LARGE SCALE MRNA] (ISOFORM 2)</scope>
    <scope>VARIANT ILE-312</scope>
    <source>
        <tissue>Ovary</tissue>
        <tissue>Skin</tissue>
    </source>
</reference>
<reference key="4">
    <citation type="journal article" date="2007" name="BMC Genomics">
        <title>The full-ORF clone resource of the German cDNA consortium.</title>
        <authorList>
            <person name="Bechtel S."/>
            <person name="Rosenfelder H."/>
            <person name="Duda A."/>
            <person name="Schmidt C.P."/>
            <person name="Ernst U."/>
            <person name="Wellenreuther R."/>
            <person name="Mehrle A."/>
            <person name="Schuster C."/>
            <person name="Bahr A."/>
            <person name="Bloecker H."/>
            <person name="Heubner D."/>
            <person name="Hoerlein A."/>
            <person name="Michel G."/>
            <person name="Wedler H."/>
            <person name="Koehrer K."/>
            <person name="Ottenwaelder B."/>
            <person name="Poustka A."/>
            <person name="Wiemann S."/>
            <person name="Schupp I."/>
        </authorList>
    </citation>
    <scope>NUCLEOTIDE SEQUENCE [LARGE SCALE MRNA] OF 114-357</scope>
    <scope>VARIANT ILE-312</scope>
    <source>
        <tissue>Fetal kidney</tissue>
    </source>
</reference>
<reference key="5">
    <citation type="journal article" date="2015" name="Angew. Chem. Int. Ed.">
        <title>Multifunctional reagents for quantitative proteome-wide analysis of protein modification in human cells and dynamic profiling of protein lipidation during vertebrate development.</title>
        <authorList>
            <person name="Broncel M."/>
            <person name="Serwa R.A."/>
            <person name="Ciepla P."/>
            <person name="Krause E."/>
            <person name="Dallman M.J."/>
            <person name="Magee A.I."/>
            <person name="Tate E.W."/>
        </authorList>
    </citation>
    <scope>MYRISTOYLATION AT GLY-2</scope>
    <scope>CLEAVAGE OF INITIATOR METHIONINE</scope>
    <scope>IDENTIFICATION BY MASS SPECTROMETRY</scope>
</reference>
<reference key="6">
    <citation type="journal article" date="2022" name="Biochemistry">
        <title>Human Protein-l-isoaspartate O-Methyltransferase Domain-Containing Protein 1 (PCMTD1) Associates with Cullin-RING Ligase Proteins.</title>
        <authorList>
            <person name="Warmack R.A."/>
            <person name="Pang E.Z."/>
            <person name="Peluso E."/>
            <person name="Lowenson J.D."/>
            <person name="Ong J.Y."/>
            <person name="Torres J.Z."/>
            <person name="Clarke S.G."/>
        </authorList>
    </citation>
    <scope>FUNCTION</scope>
    <scope>DOMAIN</scope>
    <scope>INTERACTION WITH ELOB AND ELOC</scope>
    <scope>IDENTIFICATION IN A E3 UBIQUITIN-PROTEIN LIGASE COMPLEX</scope>
</reference>
<protein>
    <recommendedName>
        <fullName evidence="9">Protein-L-isoaspartate O-methyltransferase domain-containing protein 1</fullName>
    </recommendedName>
</protein>
<accession>Q96MG8</accession>
<accession>F5H1M8</accession>
<accession>Q96FK9</accession>
<dbReference type="EMBL" id="AK056952">
    <property type="protein sequence ID" value="BAB71324.1"/>
    <property type="molecule type" value="mRNA"/>
</dbReference>
<dbReference type="EMBL" id="AC090186">
    <property type="status" value="NOT_ANNOTATED_CDS"/>
    <property type="molecule type" value="Genomic_DNA"/>
</dbReference>
<dbReference type="EMBL" id="AC103769">
    <property type="status" value="NOT_ANNOTATED_CDS"/>
    <property type="molecule type" value="Genomic_DNA"/>
</dbReference>
<dbReference type="EMBL" id="BC010693">
    <property type="protein sequence ID" value="AAH10693.1"/>
    <property type="molecule type" value="mRNA"/>
</dbReference>
<dbReference type="EMBL" id="BC032670">
    <property type="protein sequence ID" value="AAH32670.1"/>
    <property type="molecule type" value="mRNA"/>
</dbReference>
<dbReference type="EMBL" id="BX640885">
    <property type="protein sequence ID" value="CAE45939.1"/>
    <property type="molecule type" value="mRNA"/>
</dbReference>
<dbReference type="CCDS" id="CCDS6148.1">
    <molecule id="Q96MG8-1"/>
</dbReference>
<dbReference type="CCDS" id="CCDS69480.1">
    <molecule id="Q96MG8-2"/>
</dbReference>
<dbReference type="RefSeq" id="NP_001273711.1">
    <molecule id="Q96MG8-2"/>
    <property type="nucleotide sequence ID" value="NM_001286782.1"/>
</dbReference>
<dbReference type="RefSeq" id="NP_443169.2">
    <molecule id="Q96MG8-1"/>
    <property type="nucleotide sequence ID" value="NM_052937.4"/>
</dbReference>
<dbReference type="RefSeq" id="XP_047277279.1">
    <molecule id="Q96MG8-1"/>
    <property type="nucleotide sequence ID" value="XM_047421323.1"/>
</dbReference>
<dbReference type="SMR" id="Q96MG8"/>
<dbReference type="BioGRID" id="125425">
    <property type="interactions" value="23"/>
</dbReference>
<dbReference type="FunCoup" id="Q96MG8">
    <property type="interactions" value="387"/>
</dbReference>
<dbReference type="IntAct" id="Q96MG8">
    <property type="interactions" value="10"/>
</dbReference>
<dbReference type="MINT" id="Q96MG8"/>
<dbReference type="STRING" id="9606.ENSP00000353739"/>
<dbReference type="iPTMnet" id="Q96MG8"/>
<dbReference type="PhosphoSitePlus" id="Q96MG8"/>
<dbReference type="BioMuta" id="PCMTD1"/>
<dbReference type="DMDM" id="269849644"/>
<dbReference type="jPOST" id="Q96MG8"/>
<dbReference type="MassIVE" id="Q96MG8"/>
<dbReference type="PaxDb" id="9606-ENSP00000353739"/>
<dbReference type="PeptideAtlas" id="Q96MG8"/>
<dbReference type="ProteomicsDB" id="25704"/>
<dbReference type="ProteomicsDB" id="77354">
    <molecule id="Q96MG8-1"/>
</dbReference>
<dbReference type="ProteomicsDB" id="77355">
    <molecule id="Q96MG8-2"/>
</dbReference>
<dbReference type="Pumba" id="Q96MG8"/>
<dbReference type="Antibodypedia" id="11598">
    <property type="antibodies" value="95 antibodies from 16 providers"/>
</dbReference>
<dbReference type="DNASU" id="115294"/>
<dbReference type="Ensembl" id="ENST00000360540.9">
    <molecule id="Q96MG8-1"/>
    <property type="protein sequence ID" value="ENSP00000353739.5"/>
    <property type="gene ID" value="ENSG00000168300.14"/>
</dbReference>
<dbReference type="Ensembl" id="ENST00000522514.6">
    <molecule id="Q96MG8-1"/>
    <property type="protein sequence ID" value="ENSP00000428099.1"/>
    <property type="gene ID" value="ENSG00000168300.14"/>
</dbReference>
<dbReference type="Ensembl" id="ENST00000544451.2">
    <molecule id="Q96MG8-2"/>
    <property type="protein sequence ID" value="ENSP00000444026.1"/>
    <property type="gene ID" value="ENSG00000168300.14"/>
</dbReference>
<dbReference type="GeneID" id="115294"/>
<dbReference type="KEGG" id="hsa:115294"/>
<dbReference type="MANE-Select" id="ENST00000522514.6">
    <property type="protein sequence ID" value="ENSP00000428099.1"/>
    <property type="RefSeq nucleotide sequence ID" value="NM_052937.4"/>
    <property type="RefSeq protein sequence ID" value="NP_443169.2"/>
</dbReference>
<dbReference type="UCSC" id="uc003xqx.6">
    <molecule id="Q96MG8-1"/>
    <property type="organism name" value="human"/>
</dbReference>
<dbReference type="AGR" id="HGNC:30483"/>
<dbReference type="CTD" id="115294"/>
<dbReference type="DisGeNET" id="115294"/>
<dbReference type="GeneCards" id="PCMTD1"/>
<dbReference type="HGNC" id="HGNC:30483">
    <property type="gene designation" value="PCMTD1"/>
</dbReference>
<dbReference type="HPA" id="ENSG00000168300">
    <property type="expression patterns" value="Low tissue specificity"/>
</dbReference>
<dbReference type="MIM" id="620091">
    <property type="type" value="gene"/>
</dbReference>
<dbReference type="neXtProt" id="NX_Q96MG8"/>
<dbReference type="OpenTargets" id="ENSG00000168300"/>
<dbReference type="PharmGKB" id="PA142671194"/>
<dbReference type="VEuPathDB" id="HostDB:ENSG00000168300"/>
<dbReference type="eggNOG" id="KOG1661">
    <property type="taxonomic scope" value="Eukaryota"/>
</dbReference>
<dbReference type="GeneTree" id="ENSGT00950000183032"/>
<dbReference type="HOGENOM" id="CLU_029295_0_0_1"/>
<dbReference type="InParanoid" id="Q96MG8"/>
<dbReference type="OMA" id="QSTWDSR"/>
<dbReference type="OrthoDB" id="10257972at2759"/>
<dbReference type="PAN-GO" id="Q96MG8">
    <property type="GO annotations" value="2 GO annotations based on evolutionary models"/>
</dbReference>
<dbReference type="PhylomeDB" id="Q96MG8"/>
<dbReference type="TreeFam" id="TF329329"/>
<dbReference type="PathwayCommons" id="Q96MG8"/>
<dbReference type="SignaLink" id="Q96MG8"/>
<dbReference type="BioGRID-ORCS" id="115294">
    <property type="hits" value="27 hits in 1154 CRISPR screens"/>
</dbReference>
<dbReference type="ChiTaRS" id="PCMTD1">
    <property type="organism name" value="human"/>
</dbReference>
<dbReference type="GenomeRNAi" id="115294"/>
<dbReference type="Pharos" id="Q96MG8">
    <property type="development level" value="Tbio"/>
</dbReference>
<dbReference type="PRO" id="PR:Q96MG8"/>
<dbReference type="Proteomes" id="UP000005640">
    <property type="component" value="Chromosome 8"/>
</dbReference>
<dbReference type="RNAct" id="Q96MG8">
    <property type="molecule type" value="protein"/>
</dbReference>
<dbReference type="Bgee" id="ENSG00000168300">
    <property type="expression patterns" value="Expressed in oviduct epithelium and 195 other cell types or tissues"/>
</dbReference>
<dbReference type="ExpressionAtlas" id="Q96MG8">
    <property type="expression patterns" value="baseline and differential"/>
</dbReference>
<dbReference type="GO" id="GO:0031466">
    <property type="term" value="C:Cul5-RING ubiquitin ligase complex"/>
    <property type="evidence" value="ECO:0000314"/>
    <property type="project" value="UniProtKB"/>
</dbReference>
<dbReference type="GO" id="GO:0005737">
    <property type="term" value="C:cytoplasm"/>
    <property type="evidence" value="ECO:0000318"/>
    <property type="project" value="GO_Central"/>
</dbReference>
<dbReference type="GO" id="GO:0016020">
    <property type="term" value="C:membrane"/>
    <property type="evidence" value="ECO:0007669"/>
    <property type="project" value="UniProtKB-SubCell"/>
</dbReference>
<dbReference type="GO" id="GO:0004719">
    <property type="term" value="F:protein-L-isoaspartate (D-aspartate) O-methyltransferase activity"/>
    <property type="evidence" value="ECO:0000318"/>
    <property type="project" value="GO_Central"/>
</dbReference>
<dbReference type="GO" id="GO:1990756">
    <property type="term" value="F:ubiquitin-like ligase-substrate adaptor activity"/>
    <property type="evidence" value="ECO:0000314"/>
    <property type="project" value="UniProtKB"/>
</dbReference>
<dbReference type="GO" id="GO:0016567">
    <property type="term" value="P:protein ubiquitination"/>
    <property type="evidence" value="ECO:0000314"/>
    <property type="project" value="UniProtKB"/>
</dbReference>
<dbReference type="FunFam" id="3.40.50.150:FF:000015">
    <property type="entry name" value="Protein-L-isoaspartate (D-aspartate) O-methyltransferase domain-containing 1"/>
    <property type="match status" value="1"/>
</dbReference>
<dbReference type="Gene3D" id="3.40.50.150">
    <property type="entry name" value="Vaccinia Virus protein VP39"/>
    <property type="match status" value="1"/>
</dbReference>
<dbReference type="InterPro" id="IPR000682">
    <property type="entry name" value="PCMT"/>
</dbReference>
<dbReference type="InterPro" id="IPR029063">
    <property type="entry name" value="SAM-dependent_MTases_sf"/>
</dbReference>
<dbReference type="PANTHER" id="PTHR11579">
    <property type="entry name" value="PROTEIN-L-ISOASPARTATE O-METHYLTRANSFERASE"/>
    <property type="match status" value="1"/>
</dbReference>
<dbReference type="PANTHER" id="PTHR11579:SF4">
    <property type="entry name" value="PROTEIN-L-ISOASPARTATE O-METHYLTRANSFERASE DOMAIN-CONTAINING PROTEIN 1"/>
    <property type="match status" value="1"/>
</dbReference>
<dbReference type="Pfam" id="PF01135">
    <property type="entry name" value="PCMT"/>
    <property type="match status" value="1"/>
</dbReference>
<dbReference type="SUPFAM" id="SSF53335">
    <property type="entry name" value="S-adenosyl-L-methionine-dependent methyltransferases"/>
    <property type="match status" value="1"/>
</dbReference>
<feature type="initiator methionine" description="Removed" evidence="7">
    <location>
        <position position="1"/>
    </location>
</feature>
<feature type="chain" id="PRO_0000111925" description="Protein-L-isoaspartate O-methyltransferase domain-containing protein 1">
    <location>
        <begin position="2"/>
        <end position="357"/>
    </location>
</feature>
<feature type="region of interest" description="AdoMet binding motif" evidence="10">
    <location>
        <begin position="85"/>
        <end position="94"/>
    </location>
</feature>
<feature type="region of interest" description="AdoMet binding motif" evidence="10">
    <location>
        <begin position="160"/>
        <end position="164"/>
    </location>
</feature>
<feature type="region of interest" description="AdoMet binding motif" evidence="10">
    <location>
        <begin position="181"/>
        <end position="191"/>
    </location>
</feature>
<feature type="region of interest" description="BC-box" evidence="10">
    <location>
        <begin position="240"/>
        <end position="250"/>
    </location>
</feature>
<feature type="region of interest" description="Disordered" evidence="3">
    <location>
        <begin position="299"/>
        <end position="333"/>
    </location>
</feature>
<feature type="region of interest" description="CUL-box" evidence="10">
    <location>
        <begin position="341"/>
        <end position="344"/>
    </location>
</feature>
<feature type="compositionally biased region" description="Acidic residues" evidence="3">
    <location>
        <begin position="301"/>
        <end position="317"/>
    </location>
</feature>
<feature type="compositionally biased region" description="Basic and acidic residues" evidence="3">
    <location>
        <begin position="318"/>
        <end position="333"/>
    </location>
</feature>
<feature type="active site" evidence="2">
    <location>
        <position position="64"/>
    </location>
</feature>
<feature type="lipid moiety-binding region" description="N-myristoyl glycine" evidence="7">
    <location>
        <position position="2"/>
    </location>
</feature>
<feature type="splice variant" id="VSP_061574" description="In isoform 2.">
    <original>MGGAVSAGEDNDDLIDNLKEAQYIRTERVEQAFRAIDRGDYYLEGYRDNAYKDLAWKHGNIHLSAPCIYSEVMEALKLQPGLSFLNLGSGTGYLSTMVGLILGPFGINHGIELHSDVVEYAKEKLESFIKNSDSFDK</original>
    <variation>MPGPRRLRSPGGSGCSSRGSGPRLSTRRWRPCCYCGGSGVWLLRTPPSPSAWPARRCPRHR</variation>
    <location>
        <begin position="1"/>
        <end position="137"/>
    </location>
</feature>
<feature type="sequence variant" id="VAR_060401" description="In dbSNP:rs12335014." evidence="4 5 6">
    <original>N</original>
    <variation>I</variation>
    <location>
        <position position="312"/>
    </location>
</feature>
<feature type="sequence conflict" description="In Ref. 3; AAH10693." evidence="9" ref="3">
    <original>F</original>
    <variation>S</variation>
    <location>
        <position position="140"/>
    </location>
</feature>
<keyword id="KW-0025">Alternative splicing</keyword>
<keyword id="KW-0963">Cytoplasm</keyword>
<keyword id="KW-0449">Lipoprotein</keyword>
<keyword id="KW-0472">Membrane</keyword>
<keyword id="KW-0519">Myristate</keyword>
<keyword id="KW-1267">Proteomics identification</keyword>
<keyword id="KW-1185">Reference proteome</keyword>
<sequence length="357" mass="40675">MGGAVSAGEDNDDLIDNLKEAQYIRTERVEQAFRAIDRGDYYLEGYRDNAYKDLAWKHGNIHLSAPCIYSEVMEALKLQPGLSFLNLGSGTGYLSTMVGLILGPFGINHGIELHSDVVEYAKEKLESFIKNSDSFDKFEFCEPAFVVGNCLQIASDSHQYDRIYCGAGVQKDHENYMKILLKVGGILVMPIEDQLTQIMRTGQNTWESKNILAVSFAPLVQPSKNDNGKPDSVGLPPCAVRNLQDLARIYIRRTLRNFINDEMQAKGIPQRAPPKRKRKRVKQRINTYVFVGNQLIPQPLDSEEDEKMEEDNKEEEEKDHNEAMKPEEPPQNLLREKIMKLPLPESLKAYLTYFRDK</sequence>
<gene>
    <name evidence="11" type="primary">PCMTD1</name>
</gene>
<organism>
    <name type="scientific">Homo sapiens</name>
    <name type="common">Human</name>
    <dbReference type="NCBI Taxonomy" id="9606"/>
    <lineage>
        <taxon>Eukaryota</taxon>
        <taxon>Metazoa</taxon>
        <taxon>Chordata</taxon>
        <taxon>Craniata</taxon>
        <taxon>Vertebrata</taxon>
        <taxon>Euteleostomi</taxon>
        <taxon>Mammalia</taxon>
        <taxon>Eutheria</taxon>
        <taxon>Euarchontoglires</taxon>
        <taxon>Primates</taxon>
        <taxon>Haplorrhini</taxon>
        <taxon>Catarrhini</taxon>
        <taxon>Hominidae</taxon>
        <taxon>Homo</taxon>
    </lineage>
</organism>
<comment type="function">
    <text evidence="8">Substrate recognition component of an ECS (Elongin BC-CUL5-SOCS-box protein) E3 ubiquitin ligase complex which mediates the ubiquitination and subsequent proteasomal degradation of target proteins (PubMed:35486881). Specifically binds to the methyltransferase cofactor S-adenosylmethionine (AdoMet) via the N-terminal AdoMet binding motif, but does not display methyltransferase activity (PubMed:35486881). May provide an alternate maintenance pathway for modified proteins by acting as a damage-specific E3 ubiquitin ligase adaptor protein (PubMed:35486881).</text>
</comment>
<comment type="subunit">
    <text evidence="8">Component of the probable ECS(PCMTD1) E3 ubiquitin-protein ligase complex, at least composed of CUL5, ELOB, ELOC, RBX2 and PCMTD1 (PubMed:35486881). Interacts (via the BC-box) with ELOB and ELOC; the interaction is direct and stabilizes PCMTD1 (PubMed:35486881).</text>
</comment>
<comment type="interaction">
    <interactant intactId="EBI-2561395">
        <id>Q96MG8</id>
    </interactant>
    <interactant intactId="EBI-21251460">
        <id>O60260-5</id>
        <label>PRKN</label>
    </interactant>
    <organismsDiffer>false</organismsDiffer>
    <experiments>3</experiments>
</comment>
<comment type="subcellular location">
    <subcellularLocation>
        <location evidence="1">Cytoplasm</location>
    </subcellularLocation>
    <subcellularLocation>
        <location evidence="9">Membrane</location>
        <topology evidence="9">Lipid-anchor</topology>
    </subcellularLocation>
</comment>
<comment type="alternative products">
    <event type="alternative splicing"/>
    <isoform>
        <id>Q96MG8-1</id>
        <name>1</name>
        <sequence type="displayed"/>
    </isoform>
    <isoform>
        <id>Q96MG8-2</id>
        <name>2</name>
        <sequence type="described" ref="VSP_061574"/>
    </isoform>
</comment>
<comment type="domain">
    <text evidence="8">At its N-terminus, contains L-isoaspartate and S-adenosylmethionine (AdoMet) binding motifs. Also contains an extended SOCS box motif, where the Cul-box is separated from the BC-box by ~90 residues, within its C-terminus.</text>
</comment>
<comment type="similarity">
    <text evidence="9">Belongs to the methyltransferase superfamily. L-isoaspartyl/D-aspartyl protein methyltransferase family.</text>
</comment>
<comment type="caution">
    <text evidence="8">Although the active site residue Ser is conserved, appears to lack catalytic activity in vitro.</text>
</comment>